<sequence>MRGCLQTVRWLTSAWQRPPSYPPLSRAAPCRFFNVSIPRNEQSRKPVSDLERRIAAIPIDRFRNFCIVAHVDHGKSTLSDRLLELTGTIQPGGNKQVLDKLDVERERGITVKAQTCTMLYNYRGEDYLLHLVDTPGHVDFRAEVSRSYASCGGALLLVDASQGVQAQTVANFYLAFAEGLKLVPVINKVDLPSADPVRALDQMANTFELDPKTAVLVSAKTGQNVEQLLPTVVEQIPAPVGVHTKPLRMLLVDSWYSTYKGVILLVRIFDGEVRAGDHVGSLATGLKYHVGEVGIMYPGQTAQSVLRAGQVGYIYFNPAMKRSQEAKVGDTYTKVGSEKLIEPLPGFEEPKSMVFVAAYPVDASDFPHLEDSINQLLLNDRSITLQKESSEALGAGFRLGFLGTLHCSVFEDRLRQEHGASIIITPPTVPFKVIWKDGKEEIITNPALFPEEDALRAKVVELQEPFVLATLTFPEEYLGRVIELCESNRGEQKSLEFFTATQVILKYELPLAQLVDDFFGKLKGSTKGYASLDYEESGWRRSSIAKLQLLVNKVPVDAVSRVVHSSQVQKLGRVWVSKFKEHVDRQMFEVVIQAAVGRNIVARETIKPFRKDVLQKLHAADVTRRRKLLEKQKEGRKKLKAVGNVVIEHKAFQAFLAK</sequence>
<dbReference type="EC" id="3.6.5.-"/>
<dbReference type="EMBL" id="KN275964">
    <property type="protein sequence ID" value="EEH50344.1"/>
    <property type="molecule type" value="Genomic_DNA"/>
</dbReference>
<dbReference type="RefSeq" id="XP_010761877.1">
    <property type="nucleotide sequence ID" value="XM_010763575.1"/>
</dbReference>
<dbReference type="SMR" id="C1GGI6"/>
<dbReference type="FunCoup" id="C1GGI6">
    <property type="interactions" value="673"/>
</dbReference>
<dbReference type="STRING" id="502780.C1GGI6"/>
<dbReference type="GeneID" id="22585148"/>
<dbReference type="KEGG" id="pbn:PADG_06423"/>
<dbReference type="VEuPathDB" id="FungiDB:PADG_06423"/>
<dbReference type="eggNOG" id="KOG0462">
    <property type="taxonomic scope" value="Eukaryota"/>
</dbReference>
<dbReference type="HOGENOM" id="CLU_009995_3_1_1"/>
<dbReference type="InParanoid" id="C1GGI6"/>
<dbReference type="OMA" id="QVKCDEN"/>
<dbReference type="OrthoDB" id="11823at33183"/>
<dbReference type="Proteomes" id="UP000001628">
    <property type="component" value="Unassembled WGS sequence"/>
</dbReference>
<dbReference type="GO" id="GO:0005743">
    <property type="term" value="C:mitochondrial inner membrane"/>
    <property type="evidence" value="ECO:0007669"/>
    <property type="project" value="UniProtKB-SubCell"/>
</dbReference>
<dbReference type="GO" id="GO:0005759">
    <property type="term" value="C:mitochondrial matrix"/>
    <property type="evidence" value="ECO:0007669"/>
    <property type="project" value="UniProtKB-UniRule"/>
</dbReference>
<dbReference type="GO" id="GO:0005525">
    <property type="term" value="F:GTP binding"/>
    <property type="evidence" value="ECO:0007669"/>
    <property type="project" value="UniProtKB-UniRule"/>
</dbReference>
<dbReference type="GO" id="GO:0003924">
    <property type="term" value="F:GTPase activity"/>
    <property type="evidence" value="ECO:0007669"/>
    <property type="project" value="UniProtKB-UniRule"/>
</dbReference>
<dbReference type="GO" id="GO:0097177">
    <property type="term" value="F:mitochondrial ribosome binding"/>
    <property type="evidence" value="ECO:0007669"/>
    <property type="project" value="EnsemblFungi"/>
</dbReference>
<dbReference type="GO" id="GO:0045727">
    <property type="term" value="P:positive regulation of translation"/>
    <property type="evidence" value="ECO:0007669"/>
    <property type="project" value="UniProtKB-UniRule"/>
</dbReference>
<dbReference type="GO" id="GO:0006412">
    <property type="term" value="P:translation"/>
    <property type="evidence" value="ECO:0007669"/>
    <property type="project" value="UniProtKB-KW"/>
</dbReference>
<dbReference type="CDD" id="cd03699">
    <property type="entry name" value="EF4_II"/>
    <property type="match status" value="1"/>
</dbReference>
<dbReference type="CDD" id="cd16260">
    <property type="entry name" value="EF4_III"/>
    <property type="match status" value="1"/>
</dbReference>
<dbReference type="CDD" id="cd01890">
    <property type="entry name" value="LepA"/>
    <property type="match status" value="1"/>
</dbReference>
<dbReference type="CDD" id="cd03709">
    <property type="entry name" value="lepA_C"/>
    <property type="match status" value="1"/>
</dbReference>
<dbReference type="FunFam" id="3.40.50.300:FF:000078">
    <property type="entry name" value="Elongation factor 4"/>
    <property type="match status" value="1"/>
</dbReference>
<dbReference type="FunFam" id="2.40.30.10:FF:000015">
    <property type="entry name" value="Translation factor GUF1, mitochondrial"/>
    <property type="match status" value="1"/>
</dbReference>
<dbReference type="FunFam" id="3.30.70.240:FF:000007">
    <property type="entry name" value="Translation factor GUF1, mitochondrial"/>
    <property type="match status" value="1"/>
</dbReference>
<dbReference type="FunFam" id="3.30.70.2570:FF:000001">
    <property type="entry name" value="Translation factor GUF1, mitochondrial"/>
    <property type="match status" value="1"/>
</dbReference>
<dbReference type="FunFam" id="3.30.70.870:FF:000004">
    <property type="entry name" value="Translation factor GUF1, mitochondrial"/>
    <property type="match status" value="1"/>
</dbReference>
<dbReference type="Gene3D" id="3.30.70.240">
    <property type="match status" value="1"/>
</dbReference>
<dbReference type="Gene3D" id="3.30.70.2570">
    <property type="entry name" value="Elongation factor 4, C-terminal domain"/>
    <property type="match status" value="1"/>
</dbReference>
<dbReference type="Gene3D" id="3.30.70.870">
    <property type="entry name" value="Elongation Factor G (Translational Gtpase), domain 3"/>
    <property type="match status" value="1"/>
</dbReference>
<dbReference type="Gene3D" id="3.40.50.300">
    <property type="entry name" value="P-loop containing nucleotide triphosphate hydrolases"/>
    <property type="match status" value="1"/>
</dbReference>
<dbReference type="Gene3D" id="2.40.30.10">
    <property type="entry name" value="Translation factors"/>
    <property type="match status" value="1"/>
</dbReference>
<dbReference type="HAMAP" id="MF_00071">
    <property type="entry name" value="LepA"/>
    <property type="match status" value="1"/>
</dbReference>
<dbReference type="InterPro" id="IPR006297">
    <property type="entry name" value="EF-4"/>
</dbReference>
<dbReference type="InterPro" id="IPR035647">
    <property type="entry name" value="EFG_III/V"/>
</dbReference>
<dbReference type="InterPro" id="IPR000640">
    <property type="entry name" value="EFG_V-like"/>
</dbReference>
<dbReference type="InterPro" id="IPR031157">
    <property type="entry name" value="G_TR_CS"/>
</dbReference>
<dbReference type="InterPro" id="IPR038363">
    <property type="entry name" value="LepA_C_sf"/>
</dbReference>
<dbReference type="InterPro" id="IPR013842">
    <property type="entry name" value="LepA_CTD"/>
</dbReference>
<dbReference type="InterPro" id="IPR035654">
    <property type="entry name" value="LepA_IV"/>
</dbReference>
<dbReference type="InterPro" id="IPR027417">
    <property type="entry name" value="P-loop_NTPase"/>
</dbReference>
<dbReference type="InterPro" id="IPR005225">
    <property type="entry name" value="Small_GTP-bd"/>
</dbReference>
<dbReference type="InterPro" id="IPR000795">
    <property type="entry name" value="T_Tr_GTP-bd_dom"/>
</dbReference>
<dbReference type="NCBIfam" id="TIGR01393">
    <property type="entry name" value="lepA"/>
    <property type="match status" value="1"/>
</dbReference>
<dbReference type="NCBIfam" id="TIGR00231">
    <property type="entry name" value="small_GTP"/>
    <property type="match status" value="1"/>
</dbReference>
<dbReference type="PANTHER" id="PTHR43512:SF7">
    <property type="entry name" value="TRANSLATION FACTOR GUF1, MITOCHONDRIAL"/>
    <property type="match status" value="1"/>
</dbReference>
<dbReference type="PANTHER" id="PTHR43512">
    <property type="entry name" value="TRANSLATION FACTOR GUF1-RELATED"/>
    <property type="match status" value="1"/>
</dbReference>
<dbReference type="Pfam" id="PF00679">
    <property type="entry name" value="EFG_C"/>
    <property type="match status" value="1"/>
</dbReference>
<dbReference type="Pfam" id="PF00009">
    <property type="entry name" value="GTP_EFTU"/>
    <property type="match status" value="1"/>
</dbReference>
<dbReference type="Pfam" id="PF06421">
    <property type="entry name" value="LepA_C"/>
    <property type="match status" value="1"/>
</dbReference>
<dbReference type="PRINTS" id="PR00315">
    <property type="entry name" value="ELONGATNFCT"/>
</dbReference>
<dbReference type="SUPFAM" id="SSF54980">
    <property type="entry name" value="EF-G C-terminal domain-like"/>
    <property type="match status" value="2"/>
</dbReference>
<dbReference type="SUPFAM" id="SSF52540">
    <property type="entry name" value="P-loop containing nucleoside triphosphate hydrolases"/>
    <property type="match status" value="1"/>
</dbReference>
<dbReference type="PROSITE" id="PS00301">
    <property type="entry name" value="G_TR_1"/>
    <property type="match status" value="1"/>
</dbReference>
<dbReference type="PROSITE" id="PS51722">
    <property type="entry name" value="G_TR_2"/>
    <property type="match status" value="1"/>
</dbReference>
<evidence type="ECO:0000255" key="1">
    <source>
        <dbReference type="HAMAP-Rule" id="MF_03137"/>
    </source>
</evidence>
<evidence type="ECO:0000305" key="2"/>
<keyword id="KW-0342">GTP-binding</keyword>
<keyword id="KW-0378">Hydrolase</keyword>
<keyword id="KW-0472">Membrane</keyword>
<keyword id="KW-0496">Mitochondrion</keyword>
<keyword id="KW-0999">Mitochondrion inner membrane</keyword>
<keyword id="KW-0547">Nucleotide-binding</keyword>
<keyword id="KW-0648">Protein biosynthesis</keyword>
<keyword id="KW-1185">Reference proteome</keyword>
<keyword id="KW-0809">Transit peptide</keyword>
<reference key="1">
    <citation type="journal article" date="2011" name="PLoS Genet.">
        <title>Comparative genomic analysis of human fungal pathogens causing paracoccidioidomycosis.</title>
        <authorList>
            <person name="Desjardins C.A."/>
            <person name="Champion M.D."/>
            <person name="Holder J.W."/>
            <person name="Muszewska A."/>
            <person name="Goldberg J."/>
            <person name="Bailao A.M."/>
            <person name="Brigido M.M."/>
            <person name="Ferreira M.E."/>
            <person name="Garcia A.M."/>
            <person name="Grynberg M."/>
            <person name="Gujja S."/>
            <person name="Heiman D.I."/>
            <person name="Henn M.R."/>
            <person name="Kodira C.D."/>
            <person name="Leon-Narvaez H."/>
            <person name="Longo L.V.G."/>
            <person name="Ma L.-J."/>
            <person name="Malavazi I."/>
            <person name="Matsuo A.L."/>
            <person name="Morais F.V."/>
            <person name="Pereira M."/>
            <person name="Rodriguez-Brito S."/>
            <person name="Sakthikumar S."/>
            <person name="Salem-Izacc S.M."/>
            <person name="Sykes S.M."/>
            <person name="Teixeira M.M."/>
            <person name="Vallejo M.C."/>
            <person name="Walter M.E."/>
            <person name="Yandava C."/>
            <person name="Young S."/>
            <person name="Zeng Q."/>
            <person name="Zucker J."/>
            <person name="Felipe M.S."/>
            <person name="Goldman G.H."/>
            <person name="Haas B.J."/>
            <person name="McEwen J.G."/>
            <person name="Nino-Vega G."/>
            <person name="Puccia R."/>
            <person name="San-Blas G."/>
            <person name="Soares C.M."/>
            <person name="Birren B.W."/>
            <person name="Cuomo C.A."/>
        </authorList>
    </citation>
    <scope>NUCLEOTIDE SEQUENCE [LARGE SCALE GENOMIC DNA]</scope>
    <source>
        <strain>Pb18</strain>
    </source>
</reference>
<gene>
    <name evidence="1" type="primary">GUF1</name>
    <name type="ORF">PADG_06423</name>
</gene>
<comment type="function">
    <text evidence="1">Promotes mitochondrial protein synthesis. May act as a fidelity factor of the translation reaction, by catalyzing a one-codon backward translocation of tRNAs on improperly translocated ribosomes. Binds to mitochondrial ribosomes in a GTP-dependent manner.</text>
</comment>
<comment type="catalytic activity">
    <reaction evidence="1">
        <text>GTP + H2O = GDP + phosphate + H(+)</text>
        <dbReference type="Rhea" id="RHEA:19669"/>
        <dbReference type="ChEBI" id="CHEBI:15377"/>
        <dbReference type="ChEBI" id="CHEBI:15378"/>
        <dbReference type="ChEBI" id="CHEBI:37565"/>
        <dbReference type="ChEBI" id="CHEBI:43474"/>
        <dbReference type="ChEBI" id="CHEBI:58189"/>
    </reaction>
</comment>
<comment type="subcellular location">
    <subcellularLocation>
        <location evidence="1">Mitochondrion inner membrane</location>
        <topology evidence="1">Peripheral membrane protein</topology>
        <orientation evidence="1">Matrix side</orientation>
    </subcellularLocation>
</comment>
<comment type="similarity">
    <text evidence="2">Belongs to the TRAFAC class translation factor GTPase superfamily. Classic translation factor GTPase family. LepA subfamily.</text>
</comment>
<name>GUF1_PARBD</name>
<accession>C1GGI6</accession>
<feature type="transit peptide" description="Mitochondrion" evidence="1">
    <location>
        <begin position="1"/>
        <end position="40"/>
    </location>
</feature>
<feature type="chain" id="PRO_0000402897" description="Translation factor GUF1, mitochondrial">
    <location>
        <begin position="41"/>
        <end position="658"/>
    </location>
</feature>
<feature type="domain" description="tr-type G">
    <location>
        <begin position="60"/>
        <end position="240"/>
    </location>
</feature>
<feature type="binding site" evidence="1">
    <location>
        <begin position="69"/>
        <end position="76"/>
    </location>
    <ligand>
        <name>GTP</name>
        <dbReference type="ChEBI" id="CHEBI:37565"/>
    </ligand>
</feature>
<feature type="binding site" evidence="1">
    <location>
        <begin position="133"/>
        <end position="137"/>
    </location>
    <ligand>
        <name>GTP</name>
        <dbReference type="ChEBI" id="CHEBI:37565"/>
    </ligand>
</feature>
<feature type="binding site" evidence="1">
    <location>
        <begin position="187"/>
        <end position="190"/>
    </location>
    <ligand>
        <name>GTP</name>
        <dbReference type="ChEBI" id="CHEBI:37565"/>
    </ligand>
</feature>
<proteinExistence type="inferred from homology"/>
<protein>
    <recommendedName>
        <fullName evidence="1">Translation factor GUF1, mitochondrial</fullName>
        <ecNumber>3.6.5.-</ecNumber>
    </recommendedName>
    <alternativeName>
        <fullName evidence="1">Elongation factor 4 homolog</fullName>
        <shortName evidence="1">EF-4</shortName>
    </alternativeName>
    <alternativeName>
        <fullName evidence="1">GTPase GUF1</fullName>
    </alternativeName>
    <alternativeName>
        <fullName evidence="1">Ribosomal back-translocase</fullName>
    </alternativeName>
</protein>
<organism>
    <name type="scientific">Paracoccidioides brasiliensis (strain Pb18)</name>
    <dbReference type="NCBI Taxonomy" id="502780"/>
    <lineage>
        <taxon>Eukaryota</taxon>
        <taxon>Fungi</taxon>
        <taxon>Dikarya</taxon>
        <taxon>Ascomycota</taxon>
        <taxon>Pezizomycotina</taxon>
        <taxon>Eurotiomycetes</taxon>
        <taxon>Eurotiomycetidae</taxon>
        <taxon>Onygenales</taxon>
        <taxon>Ajellomycetaceae</taxon>
        <taxon>Paracoccidioides</taxon>
    </lineage>
</organism>